<dbReference type="EC" id="3.1.3.48"/>
<dbReference type="EMBL" id="AF250284">
    <property type="protein sequence ID" value="AAG02784.1"/>
    <property type="molecule type" value="Genomic_DNA"/>
</dbReference>
<dbReference type="RefSeq" id="NP_064860.1">
    <property type="nucleotide sequence ID" value="NC_002520.1"/>
</dbReference>
<dbReference type="SMR" id="Q9EMX1"/>
<dbReference type="GeneID" id="1494668"/>
<dbReference type="KEGG" id="vg:1494668"/>
<dbReference type="OrthoDB" id="12612at10239"/>
<dbReference type="Proteomes" id="UP000000872">
    <property type="component" value="Genome"/>
</dbReference>
<dbReference type="GO" id="GO:0033550">
    <property type="term" value="F:MAP kinase tyrosine phosphatase activity"/>
    <property type="evidence" value="ECO:0007669"/>
    <property type="project" value="TreeGrafter"/>
</dbReference>
<dbReference type="GO" id="GO:0017017">
    <property type="term" value="F:MAP kinase tyrosine/serine/threonine phosphatase activity"/>
    <property type="evidence" value="ECO:0007669"/>
    <property type="project" value="TreeGrafter"/>
</dbReference>
<dbReference type="GO" id="GO:0008330">
    <property type="term" value="F:protein tyrosine/threonine phosphatase activity"/>
    <property type="evidence" value="ECO:0007669"/>
    <property type="project" value="TreeGrafter"/>
</dbReference>
<dbReference type="GO" id="GO:0043409">
    <property type="term" value="P:negative regulation of MAPK cascade"/>
    <property type="evidence" value="ECO:0007669"/>
    <property type="project" value="TreeGrafter"/>
</dbReference>
<dbReference type="CDD" id="cd14498">
    <property type="entry name" value="DSP"/>
    <property type="match status" value="1"/>
</dbReference>
<dbReference type="Gene3D" id="3.90.190.10">
    <property type="entry name" value="Protein tyrosine phosphatase superfamily"/>
    <property type="match status" value="1"/>
</dbReference>
<dbReference type="InterPro" id="IPR000340">
    <property type="entry name" value="Dual-sp_phosphatase_cat-dom"/>
</dbReference>
<dbReference type="InterPro" id="IPR029021">
    <property type="entry name" value="Prot-tyrosine_phosphatase-like"/>
</dbReference>
<dbReference type="InterPro" id="IPR016130">
    <property type="entry name" value="Tyr_Pase_AS"/>
</dbReference>
<dbReference type="InterPro" id="IPR000387">
    <property type="entry name" value="Tyr_Pase_dom"/>
</dbReference>
<dbReference type="InterPro" id="IPR020422">
    <property type="entry name" value="TYR_PHOSPHATASE_DUAL_dom"/>
</dbReference>
<dbReference type="PANTHER" id="PTHR10159">
    <property type="entry name" value="DUAL SPECIFICITY PROTEIN PHOSPHATASE"/>
    <property type="match status" value="1"/>
</dbReference>
<dbReference type="PANTHER" id="PTHR10159:SF519">
    <property type="entry name" value="DUAL SPECIFICITY PROTEIN PHOSPHATASE MPK3"/>
    <property type="match status" value="1"/>
</dbReference>
<dbReference type="Pfam" id="PF00782">
    <property type="entry name" value="DSPc"/>
    <property type="match status" value="1"/>
</dbReference>
<dbReference type="SMART" id="SM00195">
    <property type="entry name" value="DSPc"/>
    <property type="match status" value="1"/>
</dbReference>
<dbReference type="SUPFAM" id="SSF52799">
    <property type="entry name" value="(Phosphotyrosine protein) phosphatases II"/>
    <property type="match status" value="1"/>
</dbReference>
<dbReference type="PROSITE" id="PS00383">
    <property type="entry name" value="TYR_PHOSPHATASE_1"/>
    <property type="match status" value="1"/>
</dbReference>
<dbReference type="PROSITE" id="PS50056">
    <property type="entry name" value="TYR_PHOSPHATASE_2"/>
    <property type="match status" value="1"/>
</dbReference>
<dbReference type="PROSITE" id="PS50054">
    <property type="entry name" value="TYR_PHOSPHATASE_DUAL"/>
    <property type="match status" value="1"/>
</dbReference>
<organism>
    <name type="scientific">Amsacta moorei entomopoxvirus</name>
    <name type="common">AmEPV</name>
    <dbReference type="NCBI Taxonomy" id="28321"/>
    <lineage>
        <taxon>Viruses</taxon>
        <taxon>Varidnaviria</taxon>
        <taxon>Bamfordvirae</taxon>
        <taxon>Nucleocytoviricota</taxon>
        <taxon>Pokkesviricetes</taxon>
        <taxon>Chitovirales</taxon>
        <taxon>Poxviridae</taxon>
        <taxon>Entomopoxvirinae</taxon>
        <taxon>Betaentomopoxvirus</taxon>
    </lineage>
</organism>
<protein>
    <recommendedName>
        <fullName>Putative tyrosine-protein phosphatase AMV078</fullName>
        <ecNumber>3.1.3.48</ecNumber>
    </recommendedName>
</protein>
<evidence type="ECO:0000255" key="1">
    <source>
        <dbReference type="PROSITE-ProRule" id="PRU00160"/>
    </source>
</evidence>
<evidence type="ECO:0000255" key="2">
    <source>
        <dbReference type="PROSITE-ProRule" id="PRU10044"/>
    </source>
</evidence>
<evidence type="ECO:0000305" key="3"/>
<keyword id="KW-0378">Hydrolase</keyword>
<keyword id="KW-0904">Protein phosphatase</keyword>
<keyword id="KW-1185">Reference proteome</keyword>
<feature type="chain" id="PRO_0000253994" description="Putative tyrosine-protein phosphatase AMV078">
    <location>
        <begin position="1"/>
        <end position="165"/>
    </location>
</feature>
<feature type="domain" description="Tyrosine-protein phosphatase" evidence="1">
    <location>
        <begin position="2"/>
        <end position="149"/>
    </location>
</feature>
<feature type="active site" description="Phosphocysteine intermediate" evidence="1">
    <location>
        <position position="94"/>
    </location>
</feature>
<organismHost>
    <name type="scientific">Amsacta</name>
    <dbReference type="NCBI Taxonomy" id="340055"/>
</organismHost>
<name>PTPH_AMEPV</name>
<gene>
    <name type="ordered locus">AMV078</name>
</gene>
<comment type="catalytic activity">
    <reaction evidence="2">
        <text>O-phospho-L-tyrosyl-[protein] + H2O = L-tyrosyl-[protein] + phosphate</text>
        <dbReference type="Rhea" id="RHEA:10684"/>
        <dbReference type="Rhea" id="RHEA-COMP:10136"/>
        <dbReference type="Rhea" id="RHEA-COMP:20101"/>
        <dbReference type="ChEBI" id="CHEBI:15377"/>
        <dbReference type="ChEBI" id="CHEBI:43474"/>
        <dbReference type="ChEBI" id="CHEBI:46858"/>
        <dbReference type="ChEBI" id="CHEBI:61978"/>
        <dbReference type="EC" id="3.1.3.48"/>
    </reaction>
</comment>
<comment type="similarity">
    <text evidence="3">Belongs to the protein-tyrosine phosphatase family. Non-receptor class dual specificity subfamily.</text>
</comment>
<sequence length="165" mass="19581">MNISNINNDIYLGGLGNHSTEEIKNFLIDNNIKCIITIWNFNKLNIKKLNINVKDYMYIHAYDLTNEIIIDYFDITNKFIINKIKEGKKVLIHCYAGISRSASIVINYFMNKYNINYDEAEKIVSKKRNIKPNIFFILQLKFYNSYKNINIIYLIILFAIRYTLK</sequence>
<accession>Q9EMX1</accession>
<reference key="1">
    <citation type="journal article" date="2000" name="Virology">
        <title>Complete genomic sequence of the Amsacta moorei entomopoxvirus: analysis and comparison with other poxviruses.</title>
        <authorList>
            <person name="Bawden A.L."/>
            <person name="Glassberg K.J."/>
            <person name="Diggans J."/>
            <person name="Shaw R."/>
            <person name="Farmerie W."/>
            <person name="Moyer R.W."/>
        </authorList>
    </citation>
    <scope>NUCLEOTIDE SEQUENCE [LARGE SCALE GENOMIC DNA]</scope>
</reference>
<proteinExistence type="inferred from homology"/>